<keyword id="KW-0808">Transferase</keyword>
<keyword id="KW-0816">Tricarboxylic acid cycle</keyword>
<dbReference type="EC" id="2.3.3.16"/>
<dbReference type="EMBL" id="U59721">
    <property type="protein sequence ID" value="AAB02964.1"/>
    <property type="molecule type" value="Genomic_DNA"/>
</dbReference>
<dbReference type="SMR" id="Q59768"/>
<dbReference type="UniPathway" id="UPA00223">
    <property type="reaction ID" value="UER00717"/>
</dbReference>
<dbReference type="GO" id="GO:0005737">
    <property type="term" value="C:cytoplasm"/>
    <property type="evidence" value="ECO:0007669"/>
    <property type="project" value="InterPro"/>
</dbReference>
<dbReference type="GO" id="GO:0004108">
    <property type="term" value="F:citrate (Si)-synthase activity"/>
    <property type="evidence" value="ECO:0007669"/>
    <property type="project" value="InterPro"/>
</dbReference>
<dbReference type="GO" id="GO:0006099">
    <property type="term" value="P:tricarboxylic acid cycle"/>
    <property type="evidence" value="ECO:0007669"/>
    <property type="project" value="UniProtKB-UniPathway"/>
</dbReference>
<dbReference type="CDD" id="cd06114">
    <property type="entry name" value="EcCS_like"/>
    <property type="match status" value="1"/>
</dbReference>
<dbReference type="FunFam" id="1.10.230.10:FF:000002">
    <property type="entry name" value="Citrate synthase"/>
    <property type="match status" value="1"/>
</dbReference>
<dbReference type="Gene3D" id="2.20.28.60">
    <property type="match status" value="1"/>
</dbReference>
<dbReference type="Gene3D" id="1.10.580.10">
    <property type="entry name" value="Citrate Synthase, domain 1"/>
    <property type="match status" value="1"/>
</dbReference>
<dbReference type="Gene3D" id="1.10.230.10">
    <property type="entry name" value="Cytochrome P450-Terp, domain 2"/>
    <property type="match status" value="1"/>
</dbReference>
<dbReference type="InterPro" id="IPR016142">
    <property type="entry name" value="Citrate_synth-like_lrg_a-sub"/>
</dbReference>
<dbReference type="InterPro" id="IPR016143">
    <property type="entry name" value="Citrate_synth-like_sm_a-sub"/>
</dbReference>
<dbReference type="InterPro" id="IPR002020">
    <property type="entry name" value="Citrate_synthase"/>
</dbReference>
<dbReference type="InterPro" id="IPR019810">
    <property type="entry name" value="Citrate_synthase_AS"/>
</dbReference>
<dbReference type="InterPro" id="IPR024176">
    <property type="entry name" value="Citrate_synthase_bac-typ"/>
</dbReference>
<dbReference type="InterPro" id="IPR036969">
    <property type="entry name" value="Citrate_synthase_sf"/>
</dbReference>
<dbReference type="InterPro" id="IPR010953">
    <property type="entry name" value="Citrate_synthase_typ-I"/>
</dbReference>
<dbReference type="NCBIfam" id="TIGR01798">
    <property type="entry name" value="cit_synth_I"/>
    <property type="match status" value="1"/>
</dbReference>
<dbReference type="NCBIfam" id="NF004126">
    <property type="entry name" value="PRK05614.1"/>
    <property type="match status" value="1"/>
</dbReference>
<dbReference type="PANTHER" id="PTHR42871">
    <property type="entry name" value="CITRATE SYNTHASE"/>
    <property type="match status" value="1"/>
</dbReference>
<dbReference type="PANTHER" id="PTHR42871:SF1">
    <property type="entry name" value="CITRATE SYNTHASE"/>
    <property type="match status" value="1"/>
</dbReference>
<dbReference type="Pfam" id="PF00285">
    <property type="entry name" value="Citrate_synt"/>
    <property type="match status" value="1"/>
</dbReference>
<dbReference type="PIRSF" id="PIRSF001369">
    <property type="entry name" value="Citrate_synth"/>
    <property type="match status" value="1"/>
</dbReference>
<dbReference type="PRINTS" id="PR00143">
    <property type="entry name" value="CITRTSNTHASE"/>
</dbReference>
<dbReference type="SUPFAM" id="SSF48256">
    <property type="entry name" value="Citrate synthase"/>
    <property type="match status" value="1"/>
</dbReference>
<dbReference type="PROSITE" id="PS00480">
    <property type="entry name" value="CITRATE_SYNTHASE"/>
    <property type="match status" value="1"/>
</dbReference>
<accession>Q59768</accession>
<protein>
    <recommendedName>
        <fullName>Citrate synthase</fullName>
        <ecNumber>2.3.3.16</ecNumber>
    </recommendedName>
</protein>
<proteinExistence type="inferred from homology"/>
<sequence length="411" mass="46277">DSEFAELKIRGKIFKLPILKASIGEDVIDISRVSAEADCFTYDPGFMSTASCQSTITYIDGDKGILRHRGYDIKDLAEKSDFLEVAYLLIYGELPSGEQYNNFTKQVAHHSLVNERLHYLFQTFCSSSHPMAIMLAAVGSLSAFYPDLLNFKEADYELTAIRMIAKIPTIAAMSYKYSIGQPFIYPDNSLDFTENFLHMMFATPCTKYKVNPIIKNALNKIFILHADHEQNASTSTVRIAGSSGANPFACISTGIASLWGPAHGGANEVVINMLKEIGSSEYIPKYIAKAKDKNDPFRLMGFGHRIYKNYDPRAAVLKETCKEVLKELGQLDNNPLLQIAIELEAIALKDEYFIERKLYPNVDFYSGIIYKAMGIPSQMFTVLFAIARTVGWMAQWKEMHEDPEQKISRPR</sequence>
<feature type="chain" id="PRO_0000169968" description="Citrate synthase">
    <location>
        <begin position="1" status="less than"/>
        <end position="411" status="greater than"/>
    </location>
</feature>
<feature type="active site" evidence="1">
    <location>
        <position position="304"/>
    </location>
</feature>
<feature type="active site" evidence="1">
    <location>
        <position position="363"/>
    </location>
</feature>
<feature type="non-terminal residue">
    <location>
        <position position="1"/>
    </location>
</feature>
<feature type="non-terminal residue">
    <location>
        <position position="411"/>
    </location>
</feature>
<organism>
    <name type="scientific">Rickettsia rhipicephali</name>
    <dbReference type="NCBI Taxonomy" id="33992"/>
    <lineage>
        <taxon>Bacteria</taxon>
        <taxon>Pseudomonadati</taxon>
        <taxon>Pseudomonadota</taxon>
        <taxon>Alphaproteobacteria</taxon>
        <taxon>Rickettsiales</taxon>
        <taxon>Rickettsiaceae</taxon>
        <taxon>Rickettsieae</taxon>
        <taxon>Rickettsia</taxon>
        <taxon>spotted fever group</taxon>
    </lineage>
</organism>
<name>CISY_RICRH</name>
<reference key="1">
    <citation type="journal article" date="1997" name="Int. J. Syst. Bacteriol.">
        <title>Citrate synthase gene comparison, a new tool for phylogenetic analysis, and its application for the rickettsiae.</title>
        <authorList>
            <person name="Roux V."/>
            <person name="Rydkina E."/>
            <person name="Eremeeva M."/>
            <person name="Raoult D."/>
        </authorList>
    </citation>
    <scope>NUCLEOTIDE SEQUENCE [GENOMIC DNA]</scope>
    <source>
        <strain>3-7-6</strain>
    </source>
</reference>
<comment type="catalytic activity">
    <reaction evidence="1">
        <text>oxaloacetate + acetyl-CoA + H2O = citrate + CoA + H(+)</text>
        <dbReference type="Rhea" id="RHEA:16845"/>
        <dbReference type="ChEBI" id="CHEBI:15377"/>
        <dbReference type="ChEBI" id="CHEBI:15378"/>
        <dbReference type="ChEBI" id="CHEBI:16452"/>
        <dbReference type="ChEBI" id="CHEBI:16947"/>
        <dbReference type="ChEBI" id="CHEBI:57287"/>
        <dbReference type="ChEBI" id="CHEBI:57288"/>
        <dbReference type="EC" id="2.3.3.16"/>
    </reaction>
</comment>
<comment type="pathway">
    <text>Carbohydrate metabolism; tricarboxylic acid cycle; isocitrate from oxaloacetate: step 1/2.</text>
</comment>
<comment type="miscellaneous">
    <text>Citrate synthase is found in nearly all cells capable of oxidative metabolism.</text>
</comment>
<comment type="similarity">
    <text evidence="2">Belongs to the citrate synthase family.</text>
</comment>
<evidence type="ECO:0000255" key="1">
    <source>
        <dbReference type="PROSITE-ProRule" id="PRU10117"/>
    </source>
</evidence>
<evidence type="ECO:0000305" key="2"/>
<gene>
    <name type="primary">gltA</name>
</gene>